<proteinExistence type="inferred from homology"/>
<keyword id="KW-0687">Ribonucleoprotein</keyword>
<keyword id="KW-0689">Ribosomal protein</keyword>
<keyword id="KW-0694">RNA-binding</keyword>
<keyword id="KW-0699">rRNA-binding</keyword>
<reference key="1">
    <citation type="journal article" date="2005" name="Genome Res.">
        <title>Comparative and functional genomic analyses of the pathogenicity of phytopathogen Xanthomonas campestris pv. campestris.</title>
        <authorList>
            <person name="Qian W."/>
            <person name="Jia Y."/>
            <person name="Ren S.-X."/>
            <person name="He Y.-Q."/>
            <person name="Feng J.-X."/>
            <person name="Lu L.-F."/>
            <person name="Sun Q."/>
            <person name="Ying G."/>
            <person name="Tang D.-J."/>
            <person name="Tang H."/>
            <person name="Wu W."/>
            <person name="Hao P."/>
            <person name="Wang L."/>
            <person name="Jiang B.-L."/>
            <person name="Zeng S."/>
            <person name="Gu W.-Y."/>
            <person name="Lu G."/>
            <person name="Rong L."/>
            <person name="Tian Y."/>
            <person name="Yao Z."/>
            <person name="Fu G."/>
            <person name="Chen B."/>
            <person name="Fang R."/>
            <person name="Qiang B."/>
            <person name="Chen Z."/>
            <person name="Zhao G.-P."/>
            <person name="Tang J.-L."/>
            <person name="He C."/>
        </authorList>
    </citation>
    <scope>NUCLEOTIDE SEQUENCE [LARGE SCALE GENOMIC DNA]</scope>
    <source>
        <strain>8004</strain>
    </source>
</reference>
<organism>
    <name type="scientific">Xanthomonas campestris pv. campestris (strain 8004)</name>
    <dbReference type="NCBI Taxonomy" id="314565"/>
    <lineage>
        <taxon>Bacteria</taxon>
        <taxon>Pseudomonadati</taxon>
        <taxon>Pseudomonadota</taxon>
        <taxon>Gammaproteobacteria</taxon>
        <taxon>Lysobacterales</taxon>
        <taxon>Lysobacteraceae</taxon>
        <taxon>Xanthomonas</taxon>
    </lineage>
</organism>
<dbReference type="EMBL" id="CP000050">
    <property type="protein sequence ID" value="AAY49720.1"/>
    <property type="molecule type" value="Genomic_DNA"/>
</dbReference>
<dbReference type="RefSeq" id="WP_011036747.1">
    <property type="nucleotide sequence ID" value="NZ_CP155948.1"/>
</dbReference>
<dbReference type="SMR" id="Q4UTA3"/>
<dbReference type="GeneID" id="58013845"/>
<dbReference type="KEGG" id="xcb:XC_2671"/>
<dbReference type="HOGENOM" id="CLU_113441_6_0_6"/>
<dbReference type="Proteomes" id="UP000000420">
    <property type="component" value="Chromosome"/>
</dbReference>
<dbReference type="GO" id="GO:0022627">
    <property type="term" value="C:cytosolic small ribosomal subunit"/>
    <property type="evidence" value="ECO:0007669"/>
    <property type="project" value="TreeGrafter"/>
</dbReference>
<dbReference type="GO" id="GO:0070181">
    <property type="term" value="F:small ribosomal subunit rRNA binding"/>
    <property type="evidence" value="ECO:0007669"/>
    <property type="project" value="TreeGrafter"/>
</dbReference>
<dbReference type="GO" id="GO:0003735">
    <property type="term" value="F:structural constituent of ribosome"/>
    <property type="evidence" value="ECO:0007669"/>
    <property type="project" value="InterPro"/>
</dbReference>
<dbReference type="GO" id="GO:0006412">
    <property type="term" value="P:translation"/>
    <property type="evidence" value="ECO:0007669"/>
    <property type="project" value="UniProtKB-UniRule"/>
</dbReference>
<dbReference type="CDD" id="cd00473">
    <property type="entry name" value="bS6"/>
    <property type="match status" value="1"/>
</dbReference>
<dbReference type="FunFam" id="3.30.70.60:FF:000003">
    <property type="entry name" value="30S ribosomal protein S6"/>
    <property type="match status" value="1"/>
</dbReference>
<dbReference type="Gene3D" id="3.30.70.60">
    <property type="match status" value="1"/>
</dbReference>
<dbReference type="HAMAP" id="MF_00360">
    <property type="entry name" value="Ribosomal_bS6"/>
    <property type="match status" value="1"/>
</dbReference>
<dbReference type="InterPro" id="IPR000529">
    <property type="entry name" value="Ribosomal_bS6"/>
</dbReference>
<dbReference type="InterPro" id="IPR035980">
    <property type="entry name" value="Ribosomal_bS6_sf"/>
</dbReference>
<dbReference type="InterPro" id="IPR020814">
    <property type="entry name" value="Ribosomal_S6_plastid/chlpt"/>
</dbReference>
<dbReference type="InterPro" id="IPR014717">
    <property type="entry name" value="Transl_elong_EF1B/ribsomal_bS6"/>
</dbReference>
<dbReference type="NCBIfam" id="TIGR00166">
    <property type="entry name" value="S6"/>
    <property type="match status" value="1"/>
</dbReference>
<dbReference type="PANTHER" id="PTHR21011">
    <property type="entry name" value="MITOCHONDRIAL 28S RIBOSOMAL PROTEIN S6"/>
    <property type="match status" value="1"/>
</dbReference>
<dbReference type="PANTHER" id="PTHR21011:SF1">
    <property type="entry name" value="SMALL RIBOSOMAL SUBUNIT PROTEIN BS6M"/>
    <property type="match status" value="1"/>
</dbReference>
<dbReference type="Pfam" id="PF01250">
    <property type="entry name" value="Ribosomal_S6"/>
    <property type="match status" value="1"/>
</dbReference>
<dbReference type="SUPFAM" id="SSF54995">
    <property type="entry name" value="Ribosomal protein S6"/>
    <property type="match status" value="1"/>
</dbReference>
<evidence type="ECO:0000255" key="1">
    <source>
        <dbReference type="HAMAP-Rule" id="MF_00360"/>
    </source>
</evidence>
<evidence type="ECO:0000256" key="2">
    <source>
        <dbReference type="SAM" id="MobiDB-lite"/>
    </source>
</evidence>
<evidence type="ECO:0000305" key="3"/>
<protein>
    <recommendedName>
        <fullName evidence="1">Small ribosomal subunit protein bS6</fullName>
    </recommendedName>
    <alternativeName>
        <fullName evidence="3">30S ribosomal protein S6</fullName>
    </alternativeName>
</protein>
<sequence>MSRHYEVVFLVHPDQSEQVPAMIERYKSLIEGGNGTIHRLEDWGRRQLAYPIQNLVKAHYVLLNIEVDQAVLSELVESFRFNDAVLRHLVIKRDGPDTEQSLIMKSKDEKGDKPERSERRRRDDEEGDAAPAATDTDGDNAEAA</sequence>
<feature type="chain" id="PRO_0000229591" description="Small ribosomal subunit protein bS6">
    <location>
        <begin position="1"/>
        <end position="144"/>
    </location>
</feature>
<feature type="region of interest" description="Disordered" evidence="2">
    <location>
        <begin position="97"/>
        <end position="144"/>
    </location>
</feature>
<feature type="compositionally biased region" description="Basic and acidic residues" evidence="2">
    <location>
        <begin position="105"/>
        <end position="124"/>
    </location>
</feature>
<gene>
    <name evidence="1" type="primary">rpsF</name>
    <name type="ordered locus">XC_2671</name>
</gene>
<accession>Q4UTA3</accession>
<comment type="function">
    <text evidence="1">Binds together with bS18 to 16S ribosomal RNA.</text>
</comment>
<comment type="similarity">
    <text evidence="1">Belongs to the bacterial ribosomal protein bS6 family.</text>
</comment>
<name>RS6_XANC8</name>